<reference key="1">
    <citation type="journal article" date="1985" name="Proc. Natl. Acad. Sci. U.S.A.">
        <title>Two tissue-specific isozymes of creatine kinase have closely matched amino acid sequences.</title>
        <authorList>
            <person name="Pickering L."/>
            <person name="Pang H."/>
            <person name="Biemann K."/>
            <person name="Munro H."/>
            <person name="Schimmel P."/>
        </authorList>
    </citation>
    <scope>NUCLEOTIDE SEQUENCE [MRNA]</scope>
</reference>
<reference key="2">
    <citation type="journal article" date="1984" name="J. Biol. Chem.">
        <title>Rabbit muscle creatine phosphokinase. cDNA cloning, primary structure and detection of human homologues.</title>
        <authorList>
            <person name="Putney S."/>
            <person name="Herlihy W."/>
            <person name="Royal N."/>
            <person name="Pang H."/>
            <person name="Aposhian H.V."/>
            <person name="Pickering L."/>
            <person name="Belagaje R."/>
            <person name="Biemann K."/>
            <person name="Page D."/>
            <person name="Kuby S."/>
            <person name="Schimmel P."/>
        </authorList>
    </citation>
    <scope>NUCLEOTIDE SEQUENCE [MRNA]</scope>
</reference>
<reference key="3">
    <citation type="journal article" date="1970" name="Biochem. J.">
        <title>Brain adenosine 5'-triphosphate-creatine phosphotransferase.</title>
        <authorList>
            <person name="Atherton R.S."/>
            <person name="Laws J.F."/>
            <person name="Miles B.J."/>
            <person name="Thomson A.R."/>
        </authorList>
    </citation>
    <scope>CATALYTIC ACTIVITY</scope>
    <scope>INHIBITION BY CHEMICAL MODIFICATION</scope>
</reference>
<reference key="4">
    <citation type="journal article" date="1998" name="FEBS Lett.">
        <title>Crystal structure of rabbit muscle creatine kinase.</title>
        <authorList>
            <person name="Rao J.K."/>
            <person name="Bujacz G."/>
            <person name="Wlodawer A."/>
        </authorList>
    </citation>
    <scope>X-RAY CRYSTALLOGRAPHY (2.35 ANGSTROMS)</scope>
    <source>
        <tissue>Muscle</tissue>
    </source>
</reference>
<reference key="5">
    <citation type="journal article" date="2007" name="Acta Crystallogr. D">
        <title>Structural asymmetry and intersubunit communication in muscle creatine kinase.</title>
        <authorList>
            <person name="Ohren J.F."/>
            <person name="Kundracik M.L."/>
            <person name="Borders C.L. Jr."/>
            <person name="Edmiston P."/>
            <person name="Viola R.E."/>
        </authorList>
    </citation>
    <scope>X-RAY CRYSTALLOGRAPHY (1.65 ANGSTROMS) IN COMPLEX WITH ADP</scope>
</reference>
<name>KCRM_RABIT</name>
<dbReference type="EC" id="2.7.3.2" evidence="7"/>
<dbReference type="EMBL" id="K02831">
    <property type="protein sequence ID" value="AAA31205.1"/>
    <property type="molecule type" value="mRNA"/>
</dbReference>
<dbReference type="PIR" id="A00673">
    <property type="entry name" value="KIRBCM"/>
</dbReference>
<dbReference type="RefSeq" id="NP_001075708.1">
    <property type="nucleotide sequence ID" value="NM_001082239.1"/>
</dbReference>
<dbReference type="PDB" id="1U6R">
    <property type="method" value="X-ray"/>
    <property type="resolution" value="1.65 A"/>
    <property type="chains" value="A/B=2-381"/>
</dbReference>
<dbReference type="PDB" id="2CRK">
    <property type="method" value="X-ray"/>
    <property type="resolution" value="2.35 A"/>
    <property type="chains" value="A=1-381"/>
</dbReference>
<dbReference type="PDB" id="8CI4">
    <property type="method" value="X-ray"/>
    <property type="resolution" value="2.01 A"/>
    <property type="chains" value="A=1-381"/>
</dbReference>
<dbReference type="PDBsum" id="1U6R"/>
<dbReference type="PDBsum" id="2CRK"/>
<dbReference type="PDBsum" id="8CI4"/>
<dbReference type="SMR" id="P00563"/>
<dbReference type="FunCoup" id="P00563">
    <property type="interactions" value="41"/>
</dbReference>
<dbReference type="IntAct" id="P00563">
    <property type="interactions" value="1"/>
</dbReference>
<dbReference type="MINT" id="P00563"/>
<dbReference type="STRING" id="9986.ENSOCUP00000020805"/>
<dbReference type="BindingDB" id="P00563"/>
<dbReference type="ChEMBL" id="CHEMBL1075201"/>
<dbReference type="PaxDb" id="9986-ENSOCUP00000020805"/>
<dbReference type="GeneID" id="100009056"/>
<dbReference type="CTD" id="1158"/>
<dbReference type="eggNOG" id="KOG3581">
    <property type="taxonomic scope" value="Eukaryota"/>
</dbReference>
<dbReference type="InParanoid" id="P00563"/>
<dbReference type="BRENDA" id="2.7.3.2">
    <property type="organism ID" value="1749"/>
</dbReference>
<dbReference type="SABIO-RK" id="P00563"/>
<dbReference type="EvolutionaryTrace" id="P00563"/>
<dbReference type="PRO" id="PR:P00563"/>
<dbReference type="Proteomes" id="UP000001811">
    <property type="component" value="Unplaced"/>
</dbReference>
<dbReference type="GO" id="GO:0005615">
    <property type="term" value="C:extracellular space"/>
    <property type="evidence" value="ECO:0000250"/>
    <property type="project" value="AgBase"/>
</dbReference>
<dbReference type="GO" id="GO:0005524">
    <property type="term" value="F:ATP binding"/>
    <property type="evidence" value="ECO:0007669"/>
    <property type="project" value="UniProtKB-KW"/>
</dbReference>
<dbReference type="GO" id="GO:0004111">
    <property type="term" value="F:creatine kinase activity"/>
    <property type="evidence" value="ECO:0000250"/>
    <property type="project" value="AgBase"/>
</dbReference>
<dbReference type="GO" id="GO:0046314">
    <property type="term" value="P:phosphocreatine biosynthetic process"/>
    <property type="evidence" value="ECO:0007669"/>
    <property type="project" value="InterPro"/>
</dbReference>
<dbReference type="GO" id="GO:0009408">
    <property type="term" value="P:response to heat"/>
    <property type="evidence" value="ECO:0000250"/>
    <property type="project" value="AgBase"/>
</dbReference>
<dbReference type="CDD" id="cd00716">
    <property type="entry name" value="creatine_kinase_like"/>
    <property type="match status" value="1"/>
</dbReference>
<dbReference type="FunFam" id="3.30.590.10:FF:000026">
    <property type="entry name" value="Creatine kinase B-type"/>
    <property type="match status" value="1"/>
</dbReference>
<dbReference type="FunFam" id="1.10.135.10:FF:000001">
    <property type="entry name" value="Creatine kinase M-type"/>
    <property type="match status" value="1"/>
</dbReference>
<dbReference type="Gene3D" id="1.10.135.10">
    <property type="entry name" value="ATP:guanido phosphotransferase, N-terminal domain"/>
    <property type="match status" value="1"/>
</dbReference>
<dbReference type="Gene3D" id="3.30.590.10">
    <property type="entry name" value="Glutamine synthetase/guanido kinase, catalytic domain"/>
    <property type="match status" value="1"/>
</dbReference>
<dbReference type="InterPro" id="IPR000749">
    <property type="entry name" value="ATP-guanido_PTrfase"/>
</dbReference>
<dbReference type="InterPro" id="IPR022415">
    <property type="entry name" value="ATP-guanido_PTrfase_AS"/>
</dbReference>
<dbReference type="InterPro" id="IPR022414">
    <property type="entry name" value="ATP-guanido_PTrfase_cat"/>
</dbReference>
<dbReference type="InterPro" id="IPR022413">
    <property type="entry name" value="ATP-guanido_PTrfase_N"/>
</dbReference>
<dbReference type="InterPro" id="IPR036802">
    <property type="entry name" value="ATP-guanido_PTrfase_N_sf"/>
</dbReference>
<dbReference type="InterPro" id="IPR014746">
    <property type="entry name" value="Gln_synth/guanido_kin_cat_dom"/>
</dbReference>
<dbReference type="PANTHER" id="PTHR11547">
    <property type="entry name" value="ARGININE OR CREATINE KINASE"/>
    <property type="match status" value="1"/>
</dbReference>
<dbReference type="PANTHER" id="PTHR11547:SF63">
    <property type="entry name" value="CREATINE KINASE M-TYPE"/>
    <property type="match status" value="1"/>
</dbReference>
<dbReference type="Pfam" id="PF00217">
    <property type="entry name" value="ATP-gua_Ptrans"/>
    <property type="match status" value="1"/>
</dbReference>
<dbReference type="Pfam" id="PF02807">
    <property type="entry name" value="ATP-gua_PtransN"/>
    <property type="match status" value="1"/>
</dbReference>
<dbReference type="SUPFAM" id="SSF55931">
    <property type="entry name" value="Glutamine synthetase/guanido kinase"/>
    <property type="match status" value="1"/>
</dbReference>
<dbReference type="SUPFAM" id="SSF48034">
    <property type="entry name" value="Guanido kinase N-terminal domain"/>
    <property type="match status" value="1"/>
</dbReference>
<dbReference type="PROSITE" id="PS00112">
    <property type="entry name" value="PHOSPHAGEN_KINASE"/>
    <property type="match status" value="1"/>
</dbReference>
<dbReference type="PROSITE" id="PS51510">
    <property type="entry name" value="PHOSPHAGEN_KINASE_C"/>
    <property type="match status" value="1"/>
</dbReference>
<dbReference type="PROSITE" id="PS51509">
    <property type="entry name" value="PHOSPHAGEN_KINASE_N"/>
    <property type="match status" value="1"/>
</dbReference>
<proteinExistence type="evidence at protein level"/>
<evidence type="ECO:0000250" key="1">
    <source>
        <dbReference type="UniProtKB" id="P00564"/>
    </source>
</evidence>
<evidence type="ECO:0000250" key="2">
    <source>
        <dbReference type="UniProtKB" id="P07310"/>
    </source>
</evidence>
<evidence type="ECO:0000250" key="3">
    <source>
        <dbReference type="UniProtKB" id="P12277"/>
    </source>
</evidence>
<evidence type="ECO:0000255" key="4">
    <source>
        <dbReference type="PROSITE-ProRule" id="PRU00842"/>
    </source>
</evidence>
<evidence type="ECO:0000255" key="5">
    <source>
        <dbReference type="PROSITE-ProRule" id="PRU00843"/>
    </source>
</evidence>
<evidence type="ECO:0000255" key="6">
    <source>
        <dbReference type="PROSITE-ProRule" id="PRU10029"/>
    </source>
</evidence>
<evidence type="ECO:0000269" key="7">
    <source>
    </source>
</evidence>
<evidence type="ECO:0000305" key="8"/>
<evidence type="ECO:0000305" key="9">
    <source>
    </source>
</evidence>
<evidence type="ECO:0007829" key="10">
    <source>
        <dbReference type="PDB" id="1U6R"/>
    </source>
</evidence>
<evidence type="ECO:0007829" key="11">
    <source>
        <dbReference type="PDB" id="2CRK"/>
    </source>
</evidence>
<evidence type="ECO:0007829" key="12">
    <source>
        <dbReference type="PDB" id="8CI4"/>
    </source>
</evidence>
<feature type="chain" id="PRO_0000211978" description="Creatine kinase M-type">
    <location>
        <begin position="1"/>
        <end position="381"/>
    </location>
</feature>
<feature type="domain" description="Phosphagen kinase N-terminal" evidence="4">
    <location>
        <begin position="11"/>
        <end position="98"/>
    </location>
</feature>
<feature type="domain" description="Phosphagen kinase C-terminal" evidence="5">
    <location>
        <begin position="125"/>
        <end position="367"/>
    </location>
</feature>
<feature type="binding site" evidence="9">
    <location>
        <begin position="128"/>
        <end position="132"/>
    </location>
    <ligand>
        <name>ATP</name>
        <dbReference type="ChEBI" id="CHEBI:30616"/>
    </ligand>
</feature>
<feature type="binding site" evidence="9">
    <location>
        <position position="191"/>
    </location>
    <ligand>
        <name>ATP</name>
        <dbReference type="ChEBI" id="CHEBI:30616"/>
    </ligand>
</feature>
<feature type="binding site" evidence="9">
    <location>
        <position position="236"/>
    </location>
    <ligand>
        <name>ATP</name>
        <dbReference type="ChEBI" id="CHEBI:30616"/>
    </ligand>
</feature>
<feature type="binding site" evidence="9">
    <location>
        <position position="292"/>
    </location>
    <ligand>
        <name>ATP</name>
        <dbReference type="ChEBI" id="CHEBI:30616"/>
    </ligand>
</feature>
<feature type="binding site" evidence="9">
    <location>
        <begin position="320"/>
        <end position="325"/>
    </location>
    <ligand>
        <name>ATP</name>
        <dbReference type="ChEBI" id="CHEBI:30616"/>
    </ligand>
</feature>
<feature type="modified residue" description="Phosphoserine" evidence="2">
    <location>
        <position position="164"/>
    </location>
</feature>
<feature type="modified residue" description="Phosphothreonine" evidence="1">
    <location>
        <position position="166"/>
    </location>
</feature>
<feature type="modified residue" description="Phosphoserine" evidence="1">
    <location>
        <position position="178"/>
    </location>
</feature>
<feature type="modified residue" description="Phosphothreonine" evidence="1">
    <location>
        <position position="180"/>
    </location>
</feature>
<feature type="modified residue" description="Phosphoserine" evidence="2">
    <location>
        <position position="199"/>
    </location>
</feature>
<feature type="modified residue" description="Phosphothreonine" evidence="1">
    <location>
        <position position="313"/>
    </location>
</feature>
<feature type="modified residue" description="Phosphothreonine" evidence="2">
    <location>
        <position position="322"/>
    </location>
</feature>
<feature type="modified residue" description="Phosphoserine" evidence="2">
    <location>
        <position position="372"/>
    </location>
</feature>
<feature type="helix" evidence="10">
    <location>
        <begin position="6"/>
        <end position="11"/>
    </location>
</feature>
<feature type="helix" evidence="10">
    <location>
        <begin position="16"/>
        <end position="19"/>
    </location>
</feature>
<feature type="helix" evidence="10">
    <location>
        <begin position="29"/>
        <end position="33"/>
    </location>
</feature>
<feature type="helix" evidence="10">
    <location>
        <begin position="36"/>
        <end position="42"/>
    </location>
</feature>
<feature type="helix" evidence="10">
    <location>
        <begin position="53"/>
        <end position="62"/>
    </location>
</feature>
<feature type="strand" evidence="12">
    <location>
        <begin position="67"/>
        <end position="69"/>
    </location>
</feature>
<feature type="strand" evidence="11">
    <location>
        <begin position="77"/>
        <end position="79"/>
    </location>
</feature>
<feature type="helix" evidence="10">
    <location>
        <begin position="81"/>
        <end position="84"/>
    </location>
</feature>
<feature type="helix" evidence="10">
    <location>
        <begin position="86"/>
        <end position="96"/>
    </location>
</feature>
<feature type="turn" evidence="10">
    <location>
        <begin position="97"/>
        <end position="99"/>
    </location>
</feature>
<feature type="helix" evidence="10">
    <location>
        <begin position="112"/>
        <end position="114"/>
    </location>
</feature>
<feature type="turn" evidence="10">
    <location>
        <begin position="123"/>
        <end position="125"/>
    </location>
</feature>
<feature type="strand" evidence="10">
    <location>
        <begin position="126"/>
        <end position="135"/>
    </location>
</feature>
<feature type="turn" evidence="10">
    <location>
        <begin position="143"/>
        <end position="145"/>
    </location>
</feature>
<feature type="helix" evidence="10">
    <location>
        <begin position="148"/>
        <end position="163"/>
    </location>
</feature>
<feature type="helix" evidence="10">
    <location>
        <begin position="167"/>
        <end position="169"/>
    </location>
</feature>
<feature type="strand" evidence="10">
    <location>
        <begin position="171"/>
        <end position="175"/>
    </location>
</feature>
<feature type="helix" evidence="10">
    <location>
        <begin position="176"/>
        <end position="178"/>
    </location>
</feature>
<feature type="helix" evidence="10">
    <location>
        <begin position="181"/>
        <end position="189"/>
    </location>
</feature>
<feature type="helix" evidence="10">
    <location>
        <begin position="200"/>
        <end position="203"/>
    </location>
</feature>
<feature type="turn" evidence="10">
    <location>
        <begin position="204"/>
        <end position="214"/>
    </location>
</feature>
<feature type="strand" evidence="10">
    <location>
        <begin position="216"/>
        <end position="220"/>
    </location>
</feature>
<feature type="strand" evidence="10">
    <location>
        <begin position="225"/>
        <end position="244"/>
    </location>
</feature>
<feature type="helix" evidence="10">
    <location>
        <begin position="246"/>
        <end position="267"/>
    </location>
</feature>
<feature type="turn" evidence="10">
    <location>
        <begin position="275"/>
        <end position="277"/>
    </location>
</feature>
<feature type="helix" evidence="10">
    <location>
        <begin position="284"/>
        <end position="286"/>
    </location>
</feature>
<feature type="strand" evidence="10">
    <location>
        <begin position="292"/>
        <end position="298"/>
    </location>
</feature>
<feature type="helix" evidence="10">
    <location>
        <begin position="300"/>
        <end position="303"/>
    </location>
</feature>
<feature type="helix" evidence="10">
    <location>
        <begin position="308"/>
        <end position="315"/>
    </location>
</feature>
<feature type="strand" evidence="10">
    <location>
        <begin position="317"/>
        <end position="320"/>
    </location>
</feature>
<feature type="strand" evidence="10">
    <location>
        <begin position="322"/>
        <end position="324"/>
    </location>
</feature>
<feature type="strand" evidence="10">
    <location>
        <begin position="333"/>
        <end position="338"/>
    </location>
</feature>
<feature type="strand" evidence="10">
    <location>
        <begin position="342"/>
        <end position="344"/>
    </location>
</feature>
<feature type="helix" evidence="10">
    <location>
        <begin position="346"/>
        <end position="369"/>
    </location>
</feature>
<feature type="strand" evidence="10">
    <location>
        <begin position="374"/>
        <end position="376"/>
    </location>
</feature>
<protein>
    <recommendedName>
        <fullName>Creatine kinase M-type</fullName>
        <ecNumber evidence="7">2.7.3.2</ecNumber>
    </recommendedName>
    <alternativeName>
        <fullName>Creatine kinase M chain</fullName>
    </alternativeName>
    <alternativeName>
        <fullName>Creatine phosphokinase M-type</fullName>
        <shortName>CPK-M</shortName>
    </alternativeName>
    <alternativeName>
        <fullName>M-CK</fullName>
    </alternativeName>
</protein>
<gene>
    <name type="primary">CKM</name>
</gene>
<keyword id="KW-0002">3D-structure</keyword>
<keyword id="KW-0067">ATP-binding</keyword>
<keyword id="KW-0418">Kinase</keyword>
<keyword id="KW-0547">Nucleotide-binding</keyword>
<keyword id="KW-0597">Phosphoprotein</keyword>
<keyword id="KW-1185">Reference proteome</keyword>
<keyword id="KW-0808">Transferase</keyword>
<sequence length="381" mass="43112">MPFGNTHNKYKLNYKSEEEYPDLSKHNNHMAKVLTPDLYKKLRDKETPSGFTLDDVIQTGVDNPGHPFIMTVGCVAGDEESYTVFKDLFDPIIQDRHGGFKPTDKHKTDLNHENLKGGDDLDPHYVLSSRVRTGRSIKGYTLPPHCSRGERRAVEKLSVEALNSLTGEFKGKYYPLKSMTEQEQQQLIDDHFLFDKPVSPLLLASGMARDWPDARGIWHNDNKSFLVWVNEEDHLRVISMEKGGNMKEVFRRFCVGLQKIEEIFKKAGHPFMWNEHLGYVLTCPSNLGTGLRGGVHVKLAHLSKHPKFEEILTRLRLQKRGTGGVDTAAVGSVFDISNADRLGSSEVEQVQLVVDGVKLMVEMEKKLEKGQSIDDMIPAQK</sequence>
<organism>
    <name type="scientific">Oryctolagus cuniculus</name>
    <name type="common">Rabbit</name>
    <dbReference type="NCBI Taxonomy" id="9986"/>
    <lineage>
        <taxon>Eukaryota</taxon>
        <taxon>Metazoa</taxon>
        <taxon>Chordata</taxon>
        <taxon>Craniata</taxon>
        <taxon>Vertebrata</taxon>
        <taxon>Euteleostomi</taxon>
        <taxon>Mammalia</taxon>
        <taxon>Eutheria</taxon>
        <taxon>Euarchontoglires</taxon>
        <taxon>Glires</taxon>
        <taxon>Lagomorpha</taxon>
        <taxon>Leporidae</taxon>
        <taxon>Oryctolagus</taxon>
    </lineage>
</organism>
<accession>P00563</accession>
<comment type="function">
    <text evidence="7 8">Reversibly catalyzes the transfer of phosphate between ATP and various phosphogens (e.g. creatine phosphate) (PubMed:5499971). Creatine kinase isoenzymes play a central role in energy transduction in tissues with large, fluctuating energy demands, such as skeletal muscle, heart, brain and spermatozoa (Probable).</text>
</comment>
<comment type="catalytic activity">
    <reaction evidence="6 7">
        <text>creatine + ATP = N-phosphocreatine + ADP + H(+)</text>
        <dbReference type="Rhea" id="RHEA:17157"/>
        <dbReference type="ChEBI" id="CHEBI:15378"/>
        <dbReference type="ChEBI" id="CHEBI:30616"/>
        <dbReference type="ChEBI" id="CHEBI:57947"/>
        <dbReference type="ChEBI" id="CHEBI:58092"/>
        <dbReference type="ChEBI" id="CHEBI:456216"/>
        <dbReference type="EC" id="2.7.3.2"/>
    </reaction>
</comment>
<comment type="subunit">
    <text evidence="3">Dimer of identical or non-identical chains, which can be either B (brain type) or M (muscle type). With MM being the major form in skeletal muscle and myocardium, MB existing in myocardium, and BB existing in many tissues, especially brain.</text>
</comment>
<comment type="interaction">
    <interactant intactId="EBI-2750756">
        <id>P00563</id>
    </interactant>
    <interactant intactId="EBI-7133357">
        <id>P11974</id>
        <label>PKM</label>
    </interactant>
    <organismsDiffer>false</organismsDiffer>
    <experiments>2</experiments>
</comment>
<comment type="similarity">
    <text evidence="4 5">Belongs to the ATP:guanido phosphotransferase family.</text>
</comment>